<proteinExistence type="inferred from homology"/>
<protein>
    <recommendedName>
        <fullName evidence="1">5-oxoprolinase subunit A</fullName>
        <shortName evidence="1">5-OPase subunit A</shortName>
        <ecNumber evidence="1">3.5.2.9</ecNumber>
    </recommendedName>
    <alternativeName>
        <fullName evidence="1">5-oxoprolinase (ATP-hydrolyzing) subunit A</fullName>
    </alternativeName>
</protein>
<feature type="chain" id="PRO_1000132077" description="5-oxoprolinase subunit A">
    <location>
        <begin position="1"/>
        <end position="250"/>
    </location>
</feature>
<keyword id="KW-0067">ATP-binding</keyword>
<keyword id="KW-0378">Hydrolase</keyword>
<keyword id="KW-0547">Nucleotide-binding</keyword>
<name>PXPA_STRGG</name>
<reference key="1">
    <citation type="journal article" date="2008" name="J. Bacteriol.">
        <title>Genome sequence of the streptomycin-producing microorganism Streptomyces griseus IFO 13350.</title>
        <authorList>
            <person name="Ohnishi Y."/>
            <person name="Ishikawa J."/>
            <person name="Hara H."/>
            <person name="Suzuki H."/>
            <person name="Ikenoya M."/>
            <person name="Ikeda H."/>
            <person name="Yamashita A."/>
            <person name="Hattori M."/>
            <person name="Horinouchi S."/>
        </authorList>
    </citation>
    <scope>NUCLEOTIDE SEQUENCE [LARGE SCALE GENOMIC DNA]</scope>
    <source>
        <strain>JCM 4626 / CBS 651.72 / NBRC 13350 / KCC S-0626 / ISP 5235</strain>
    </source>
</reference>
<evidence type="ECO:0000255" key="1">
    <source>
        <dbReference type="HAMAP-Rule" id="MF_00691"/>
    </source>
</evidence>
<sequence length="250" mass="25570">MMDLNADLGEGFGNWTLTDDDALLACVTSANVACGFHAGDASVMRRVCDAAAAGGVRIGAQVSYRDLAGFGRRSMDVPPAELTAEIAYQIGALRVFAEAAGATVSYVKPHGALYNRVVWDDDQAAAVVAGVRLAGGAPAVLGLPGSRLLAHAAEAGLPAVQEAFADRAYTPQGTLVPRGEPGAVVHDPDDVVRRSVGMAVERAVTGADGSRIPVAARSLCVHGDTPGAAALARRVRAALEEAGVEVRAFA</sequence>
<comment type="function">
    <text evidence="1">Catalyzes the cleavage of 5-oxoproline to form L-glutamate coupled to the hydrolysis of ATP to ADP and inorganic phosphate.</text>
</comment>
<comment type="catalytic activity">
    <reaction evidence="1">
        <text>5-oxo-L-proline + ATP + 2 H2O = L-glutamate + ADP + phosphate + H(+)</text>
        <dbReference type="Rhea" id="RHEA:10348"/>
        <dbReference type="ChEBI" id="CHEBI:15377"/>
        <dbReference type="ChEBI" id="CHEBI:15378"/>
        <dbReference type="ChEBI" id="CHEBI:29985"/>
        <dbReference type="ChEBI" id="CHEBI:30616"/>
        <dbReference type="ChEBI" id="CHEBI:43474"/>
        <dbReference type="ChEBI" id="CHEBI:58402"/>
        <dbReference type="ChEBI" id="CHEBI:456216"/>
        <dbReference type="EC" id="3.5.2.9"/>
    </reaction>
</comment>
<comment type="subunit">
    <text evidence="1">Forms a complex composed of PxpA, PxpB and PxpC.</text>
</comment>
<comment type="similarity">
    <text evidence="1">Belongs to the LamB/PxpA family.</text>
</comment>
<accession>B1VKZ4</accession>
<dbReference type="EC" id="3.5.2.9" evidence="1"/>
<dbReference type="EMBL" id="AP009493">
    <property type="protein sequence ID" value="BAG20022.1"/>
    <property type="molecule type" value="Genomic_DNA"/>
</dbReference>
<dbReference type="SMR" id="B1VKZ4"/>
<dbReference type="KEGG" id="sgr:SGR_3193"/>
<dbReference type="eggNOG" id="COG1540">
    <property type="taxonomic scope" value="Bacteria"/>
</dbReference>
<dbReference type="HOGENOM" id="CLU_069535_0_0_11"/>
<dbReference type="Proteomes" id="UP000001685">
    <property type="component" value="Chromosome"/>
</dbReference>
<dbReference type="GO" id="GO:0017168">
    <property type="term" value="F:5-oxoprolinase (ATP-hydrolyzing) activity"/>
    <property type="evidence" value="ECO:0007669"/>
    <property type="project" value="UniProtKB-UniRule"/>
</dbReference>
<dbReference type="GO" id="GO:0005524">
    <property type="term" value="F:ATP binding"/>
    <property type="evidence" value="ECO:0007669"/>
    <property type="project" value="UniProtKB-UniRule"/>
</dbReference>
<dbReference type="GO" id="GO:0005975">
    <property type="term" value="P:carbohydrate metabolic process"/>
    <property type="evidence" value="ECO:0007669"/>
    <property type="project" value="InterPro"/>
</dbReference>
<dbReference type="CDD" id="cd10787">
    <property type="entry name" value="LamB_YcsF_like"/>
    <property type="match status" value="1"/>
</dbReference>
<dbReference type="Gene3D" id="3.20.20.370">
    <property type="entry name" value="Glycoside hydrolase/deacetylase"/>
    <property type="match status" value="1"/>
</dbReference>
<dbReference type="HAMAP" id="MF_00691">
    <property type="entry name" value="PxpA"/>
    <property type="match status" value="1"/>
</dbReference>
<dbReference type="InterPro" id="IPR011330">
    <property type="entry name" value="Glyco_hydro/deAcase_b/a-brl"/>
</dbReference>
<dbReference type="InterPro" id="IPR005501">
    <property type="entry name" value="LamB/YcsF/PxpA-like"/>
</dbReference>
<dbReference type="NCBIfam" id="NF003814">
    <property type="entry name" value="PRK05406.1-3"/>
    <property type="match status" value="1"/>
</dbReference>
<dbReference type="NCBIfam" id="NF003816">
    <property type="entry name" value="PRK05406.1-5"/>
    <property type="match status" value="1"/>
</dbReference>
<dbReference type="PANTHER" id="PTHR30292:SF0">
    <property type="entry name" value="5-OXOPROLINASE SUBUNIT A"/>
    <property type="match status" value="1"/>
</dbReference>
<dbReference type="PANTHER" id="PTHR30292">
    <property type="entry name" value="UNCHARACTERIZED PROTEIN YBGL-RELATED"/>
    <property type="match status" value="1"/>
</dbReference>
<dbReference type="Pfam" id="PF03746">
    <property type="entry name" value="LamB_YcsF"/>
    <property type="match status" value="1"/>
</dbReference>
<dbReference type="SUPFAM" id="SSF88713">
    <property type="entry name" value="Glycoside hydrolase/deacetylase"/>
    <property type="match status" value="1"/>
</dbReference>
<organism>
    <name type="scientific">Streptomyces griseus subsp. griseus (strain JCM 4626 / CBS 651.72 / NBRC 13350 / KCC S-0626 / ISP 5235)</name>
    <dbReference type="NCBI Taxonomy" id="455632"/>
    <lineage>
        <taxon>Bacteria</taxon>
        <taxon>Bacillati</taxon>
        <taxon>Actinomycetota</taxon>
        <taxon>Actinomycetes</taxon>
        <taxon>Kitasatosporales</taxon>
        <taxon>Streptomycetaceae</taxon>
        <taxon>Streptomyces</taxon>
    </lineage>
</organism>
<gene>
    <name evidence="1" type="primary">pxpA</name>
    <name type="ordered locus">SGR_3193</name>
</gene>